<protein>
    <recommendedName>
        <fullName evidence="1">UDP-N-acetylglucosamine--N-acetylmuramyl-(pentapeptide) pyrophosphoryl-undecaprenol N-acetylglucosamine transferase</fullName>
        <ecNumber evidence="1">2.4.1.227</ecNumber>
    </recommendedName>
    <alternativeName>
        <fullName evidence="1">Undecaprenyl-PP-MurNAc-pentapeptide-UDPGlcNAc GlcNAc transferase</fullName>
    </alternativeName>
</protein>
<feature type="chain" id="PRO_0000225025" description="UDP-N-acetylglucosamine--N-acetylmuramyl-(pentapeptide) pyrophosphoryl-undecaprenol N-acetylglucosamine transferase">
    <location>
        <begin position="1"/>
        <end position="354"/>
    </location>
</feature>
<feature type="binding site" evidence="1">
    <location>
        <begin position="11"/>
        <end position="13"/>
    </location>
    <ligand>
        <name>UDP-N-acetyl-alpha-D-glucosamine</name>
        <dbReference type="ChEBI" id="CHEBI:57705"/>
    </ligand>
</feature>
<feature type="binding site" evidence="1">
    <location>
        <position position="164"/>
    </location>
    <ligand>
        <name>UDP-N-acetyl-alpha-D-glucosamine</name>
        <dbReference type="ChEBI" id="CHEBI:57705"/>
    </ligand>
</feature>
<feature type="binding site" evidence="1">
    <location>
        <position position="194"/>
    </location>
    <ligand>
        <name>UDP-N-acetyl-alpha-D-glucosamine</name>
        <dbReference type="ChEBI" id="CHEBI:57705"/>
    </ligand>
</feature>
<feature type="binding site" evidence="1">
    <location>
        <position position="289"/>
    </location>
    <ligand>
        <name>UDP-N-acetyl-alpha-D-glucosamine</name>
        <dbReference type="ChEBI" id="CHEBI:57705"/>
    </ligand>
</feature>
<keyword id="KW-0131">Cell cycle</keyword>
<keyword id="KW-0132">Cell division</keyword>
<keyword id="KW-1003">Cell membrane</keyword>
<keyword id="KW-0133">Cell shape</keyword>
<keyword id="KW-0961">Cell wall biogenesis/degradation</keyword>
<keyword id="KW-0328">Glycosyltransferase</keyword>
<keyword id="KW-0472">Membrane</keyword>
<keyword id="KW-0573">Peptidoglycan synthesis</keyword>
<keyword id="KW-1185">Reference proteome</keyword>
<keyword id="KW-0808">Transferase</keyword>
<proteinExistence type="inferred from homology"/>
<evidence type="ECO:0000255" key="1">
    <source>
        <dbReference type="HAMAP-Rule" id="MF_00033"/>
    </source>
</evidence>
<accession>Q5WAE4</accession>
<comment type="function">
    <text evidence="1">Cell wall formation. Catalyzes the transfer of a GlcNAc subunit on undecaprenyl-pyrophosphoryl-MurNAc-pentapeptide (lipid intermediate I) to form undecaprenyl-pyrophosphoryl-MurNAc-(pentapeptide)GlcNAc (lipid intermediate II).</text>
</comment>
<comment type="catalytic activity">
    <reaction evidence="1">
        <text>di-trans,octa-cis-undecaprenyl diphospho-N-acetyl-alpha-D-muramoyl-L-alanyl-D-glutamyl-meso-2,6-diaminopimeloyl-D-alanyl-D-alanine + UDP-N-acetyl-alpha-D-glucosamine = di-trans,octa-cis-undecaprenyl diphospho-[N-acetyl-alpha-D-glucosaminyl-(1-&gt;4)]-N-acetyl-alpha-D-muramoyl-L-alanyl-D-glutamyl-meso-2,6-diaminopimeloyl-D-alanyl-D-alanine + UDP + H(+)</text>
        <dbReference type="Rhea" id="RHEA:31227"/>
        <dbReference type="ChEBI" id="CHEBI:15378"/>
        <dbReference type="ChEBI" id="CHEBI:57705"/>
        <dbReference type="ChEBI" id="CHEBI:58223"/>
        <dbReference type="ChEBI" id="CHEBI:61387"/>
        <dbReference type="ChEBI" id="CHEBI:61388"/>
        <dbReference type="EC" id="2.4.1.227"/>
    </reaction>
</comment>
<comment type="pathway">
    <text evidence="1">Cell wall biogenesis; peptidoglycan biosynthesis.</text>
</comment>
<comment type="subcellular location">
    <subcellularLocation>
        <location evidence="1">Cell membrane</location>
        <topology evidence="1">Peripheral membrane protein</topology>
        <orientation evidence="1">Cytoplasmic side</orientation>
    </subcellularLocation>
</comment>
<comment type="similarity">
    <text evidence="1">Belongs to the glycosyltransferase 28 family. MurG subfamily.</text>
</comment>
<name>MURG_SHOC1</name>
<dbReference type="EC" id="2.4.1.227" evidence="1"/>
<dbReference type="EMBL" id="AP006627">
    <property type="protein sequence ID" value="BAD62629.1"/>
    <property type="molecule type" value="Genomic_DNA"/>
</dbReference>
<dbReference type="RefSeq" id="WP_011244950.1">
    <property type="nucleotide sequence ID" value="NC_006582.1"/>
</dbReference>
<dbReference type="SMR" id="Q5WAE4"/>
<dbReference type="STRING" id="66692.ABC0086"/>
<dbReference type="CAZy" id="GT28">
    <property type="family name" value="Glycosyltransferase Family 28"/>
</dbReference>
<dbReference type="KEGG" id="bcl:ABC0086"/>
<dbReference type="eggNOG" id="COG0707">
    <property type="taxonomic scope" value="Bacteria"/>
</dbReference>
<dbReference type="HOGENOM" id="CLU_037404_0_0_9"/>
<dbReference type="OrthoDB" id="9808936at2"/>
<dbReference type="UniPathway" id="UPA00219"/>
<dbReference type="Proteomes" id="UP000001168">
    <property type="component" value="Chromosome"/>
</dbReference>
<dbReference type="GO" id="GO:0005886">
    <property type="term" value="C:plasma membrane"/>
    <property type="evidence" value="ECO:0007669"/>
    <property type="project" value="UniProtKB-SubCell"/>
</dbReference>
<dbReference type="GO" id="GO:0051991">
    <property type="term" value="F:UDP-N-acetyl-D-glucosamine:N-acetylmuramoyl-L-alanyl-D-glutamyl-meso-2,6-diaminopimelyl-D-alanyl-D-alanine-diphosphoundecaprenol 4-beta-N-acetylglucosaminlytransferase activity"/>
    <property type="evidence" value="ECO:0007669"/>
    <property type="project" value="RHEA"/>
</dbReference>
<dbReference type="GO" id="GO:0050511">
    <property type="term" value="F:undecaprenyldiphospho-muramoylpentapeptide beta-N-acetylglucosaminyltransferase activity"/>
    <property type="evidence" value="ECO:0007669"/>
    <property type="project" value="UniProtKB-UniRule"/>
</dbReference>
<dbReference type="GO" id="GO:0005975">
    <property type="term" value="P:carbohydrate metabolic process"/>
    <property type="evidence" value="ECO:0007669"/>
    <property type="project" value="InterPro"/>
</dbReference>
<dbReference type="GO" id="GO:0051301">
    <property type="term" value="P:cell division"/>
    <property type="evidence" value="ECO:0007669"/>
    <property type="project" value="UniProtKB-KW"/>
</dbReference>
<dbReference type="GO" id="GO:0071555">
    <property type="term" value="P:cell wall organization"/>
    <property type="evidence" value="ECO:0007669"/>
    <property type="project" value="UniProtKB-KW"/>
</dbReference>
<dbReference type="GO" id="GO:0030259">
    <property type="term" value="P:lipid glycosylation"/>
    <property type="evidence" value="ECO:0007669"/>
    <property type="project" value="UniProtKB-UniRule"/>
</dbReference>
<dbReference type="GO" id="GO:0009252">
    <property type="term" value="P:peptidoglycan biosynthetic process"/>
    <property type="evidence" value="ECO:0007669"/>
    <property type="project" value="UniProtKB-UniRule"/>
</dbReference>
<dbReference type="GO" id="GO:0008360">
    <property type="term" value="P:regulation of cell shape"/>
    <property type="evidence" value="ECO:0007669"/>
    <property type="project" value="UniProtKB-KW"/>
</dbReference>
<dbReference type="CDD" id="cd03785">
    <property type="entry name" value="GT28_MurG"/>
    <property type="match status" value="1"/>
</dbReference>
<dbReference type="Gene3D" id="3.40.50.2000">
    <property type="entry name" value="Glycogen Phosphorylase B"/>
    <property type="match status" value="2"/>
</dbReference>
<dbReference type="HAMAP" id="MF_00033">
    <property type="entry name" value="MurG"/>
    <property type="match status" value="1"/>
</dbReference>
<dbReference type="InterPro" id="IPR006009">
    <property type="entry name" value="GlcNAc_MurG"/>
</dbReference>
<dbReference type="InterPro" id="IPR007235">
    <property type="entry name" value="Glyco_trans_28_C"/>
</dbReference>
<dbReference type="InterPro" id="IPR004276">
    <property type="entry name" value="GlycoTrans_28_N"/>
</dbReference>
<dbReference type="NCBIfam" id="TIGR01133">
    <property type="entry name" value="murG"/>
    <property type="match status" value="1"/>
</dbReference>
<dbReference type="NCBIfam" id="NF009102">
    <property type="entry name" value="PRK12446.1"/>
    <property type="match status" value="1"/>
</dbReference>
<dbReference type="PANTHER" id="PTHR21015:SF27">
    <property type="entry name" value="UDP-N-ACETYLGLUCOSAMINE--N-ACETYLMURAMYL-(PENTAPEPTIDE) PYROPHOSPHORYL-UNDECAPRENOL N-ACETYLGLUCOSAMINE TRANSFERASE"/>
    <property type="match status" value="1"/>
</dbReference>
<dbReference type="PANTHER" id="PTHR21015">
    <property type="entry name" value="UDP-N-ACETYLGLUCOSAMINE--N-ACETYLMURAMYL-(PENTAPEPTIDE) PYROPHOSPHORYL-UNDECAPRENOL N-ACETYLGLUCOSAMINE TRANSFERASE 1"/>
    <property type="match status" value="1"/>
</dbReference>
<dbReference type="Pfam" id="PF04101">
    <property type="entry name" value="Glyco_tran_28_C"/>
    <property type="match status" value="1"/>
</dbReference>
<dbReference type="Pfam" id="PF03033">
    <property type="entry name" value="Glyco_transf_28"/>
    <property type="match status" value="1"/>
</dbReference>
<dbReference type="SUPFAM" id="SSF53756">
    <property type="entry name" value="UDP-Glycosyltransferase/glycogen phosphorylase"/>
    <property type="match status" value="1"/>
</dbReference>
<organism>
    <name type="scientific">Shouchella clausii (strain KSM-K16)</name>
    <name type="common">Alkalihalobacillus clausii</name>
    <dbReference type="NCBI Taxonomy" id="66692"/>
    <lineage>
        <taxon>Bacteria</taxon>
        <taxon>Bacillati</taxon>
        <taxon>Bacillota</taxon>
        <taxon>Bacilli</taxon>
        <taxon>Bacillales</taxon>
        <taxon>Bacillaceae</taxon>
        <taxon>Shouchella</taxon>
    </lineage>
</organism>
<gene>
    <name evidence="1" type="primary">murG</name>
    <name type="ordered locus">ABC0086</name>
</gene>
<sequence>MKKIIFTGGGSAGHVTPNLAIINELNDKDWSIAYIGSYEGIERQLVEKAGIRYFGISSGKLRRYMDWKNVTDIARIANGFRQARKILKAEKPDVVFSKGGFVTVPVVAAAYTLRIPVHLHESDLTPGLANRLAKRFANTFYTSFAETAAHFPKEATTTVGSPIRRELLEGSRIQGLTITDFSRERPTLLVMGGSLGAKRINEAIRESLDTLTNTYQIIHICGKGHLDPALEGRRNYKQYEYVHDELPHFLQAADLVVTRGGSNAIFEFLALHIPMLIIPLSRAQSRGDQILNAQTFVKNGYARMLEEENLTKETLQQEVQELYNGRQTYIEAMNASQATNAVAYITEKLEQEVQ</sequence>
<reference key="1">
    <citation type="submission" date="2003-10" db="EMBL/GenBank/DDBJ databases">
        <title>The complete genome sequence of the alkaliphilic Bacillus clausii KSM-K16.</title>
        <authorList>
            <person name="Takaki Y."/>
            <person name="Kageyama Y."/>
            <person name="Shimamura S."/>
            <person name="Suzuki H."/>
            <person name="Nishi S."/>
            <person name="Hatada Y."/>
            <person name="Kawai S."/>
            <person name="Ito S."/>
            <person name="Horikoshi K."/>
        </authorList>
    </citation>
    <scope>NUCLEOTIDE SEQUENCE [LARGE SCALE GENOMIC DNA]</scope>
    <source>
        <strain>KSM-K16</strain>
    </source>
</reference>